<accession>B3Q605</accession>
<gene>
    <name evidence="1" type="primary">trpB</name>
    <name type="ordered locus">Rpal_0072</name>
</gene>
<dbReference type="EC" id="4.2.1.20" evidence="1"/>
<dbReference type="EMBL" id="CP001096">
    <property type="protein sequence ID" value="ACE98634.1"/>
    <property type="molecule type" value="Genomic_DNA"/>
</dbReference>
<dbReference type="RefSeq" id="WP_011155640.1">
    <property type="nucleotide sequence ID" value="NC_011004.1"/>
</dbReference>
<dbReference type="SMR" id="B3Q605"/>
<dbReference type="GeneID" id="66891070"/>
<dbReference type="KEGG" id="rpt:Rpal_0072"/>
<dbReference type="HOGENOM" id="CLU_016734_3_1_5"/>
<dbReference type="OrthoDB" id="9766131at2"/>
<dbReference type="UniPathway" id="UPA00035">
    <property type="reaction ID" value="UER00044"/>
</dbReference>
<dbReference type="Proteomes" id="UP000001725">
    <property type="component" value="Chromosome"/>
</dbReference>
<dbReference type="GO" id="GO:0005737">
    <property type="term" value="C:cytoplasm"/>
    <property type="evidence" value="ECO:0007669"/>
    <property type="project" value="TreeGrafter"/>
</dbReference>
<dbReference type="GO" id="GO:0004834">
    <property type="term" value="F:tryptophan synthase activity"/>
    <property type="evidence" value="ECO:0007669"/>
    <property type="project" value="UniProtKB-UniRule"/>
</dbReference>
<dbReference type="CDD" id="cd06446">
    <property type="entry name" value="Trp-synth_B"/>
    <property type="match status" value="1"/>
</dbReference>
<dbReference type="FunFam" id="3.40.50.1100:FF:000001">
    <property type="entry name" value="Tryptophan synthase beta chain"/>
    <property type="match status" value="1"/>
</dbReference>
<dbReference type="FunFam" id="3.40.50.1100:FF:000004">
    <property type="entry name" value="Tryptophan synthase beta chain"/>
    <property type="match status" value="1"/>
</dbReference>
<dbReference type="Gene3D" id="3.40.50.1100">
    <property type="match status" value="2"/>
</dbReference>
<dbReference type="HAMAP" id="MF_00133">
    <property type="entry name" value="Trp_synth_beta"/>
    <property type="match status" value="1"/>
</dbReference>
<dbReference type="InterPro" id="IPR006653">
    <property type="entry name" value="Trp_synth_b_CS"/>
</dbReference>
<dbReference type="InterPro" id="IPR006654">
    <property type="entry name" value="Trp_synth_beta"/>
</dbReference>
<dbReference type="InterPro" id="IPR023026">
    <property type="entry name" value="Trp_synth_beta/beta-like"/>
</dbReference>
<dbReference type="InterPro" id="IPR001926">
    <property type="entry name" value="TrpB-like_PALP"/>
</dbReference>
<dbReference type="InterPro" id="IPR036052">
    <property type="entry name" value="TrpB-like_PALP_sf"/>
</dbReference>
<dbReference type="NCBIfam" id="TIGR00263">
    <property type="entry name" value="trpB"/>
    <property type="match status" value="1"/>
</dbReference>
<dbReference type="PANTHER" id="PTHR48077:SF3">
    <property type="entry name" value="TRYPTOPHAN SYNTHASE"/>
    <property type="match status" value="1"/>
</dbReference>
<dbReference type="PANTHER" id="PTHR48077">
    <property type="entry name" value="TRYPTOPHAN SYNTHASE-RELATED"/>
    <property type="match status" value="1"/>
</dbReference>
<dbReference type="Pfam" id="PF00291">
    <property type="entry name" value="PALP"/>
    <property type="match status" value="1"/>
</dbReference>
<dbReference type="PIRSF" id="PIRSF001413">
    <property type="entry name" value="Trp_syn_beta"/>
    <property type="match status" value="1"/>
</dbReference>
<dbReference type="SUPFAM" id="SSF53686">
    <property type="entry name" value="Tryptophan synthase beta subunit-like PLP-dependent enzymes"/>
    <property type="match status" value="1"/>
</dbReference>
<dbReference type="PROSITE" id="PS00168">
    <property type="entry name" value="TRP_SYNTHASE_BETA"/>
    <property type="match status" value="1"/>
</dbReference>
<comment type="function">
    <text evidence="1">The beta subunit is responsible for the synthesis of L-tryptophan from indole and L-serine.</text>
</comment>
<comment type="catalytic activity">
    <reaction evidence="1">
        <text>(1S,2R)-1-C-(indol-3-yl)glycerol 3-phosphate + L-serine = D-glyceraldehyde 3-phosphate + L-tryptophan + H2O</text>
        <dbReference type="Rhea" id="RHEA:10532"/>
        <dbReference type="ChEBI" id="CHEBI:15377"/>
        <dbReference type="ChEBI" id="CHEBI:33384"/>
        <dbReference type="ChEBI" id="CHEBI:57912"/>
        <dbReference type="ChEBI" id="CHEBI:58866"/>
        <dbReference type="ChEBI" id="CHEBI:59776"/>
        <dbReference type="EC" id="4.2.1.20"/>
    </reaction>
</comment>
<comment type="cofactor">
    <cofactor evidence="1">
        <name>pyridoxal 5'-phosphate</name>
        <dbReference type="ChEBI" id="CHEBI:597326"/>
    </cofactor>
</comment>
<comment type="pathway">
    <text evidence="1">Amino-acid biosynthesis; L-tryptophan biosynthesis; L-tryptophan from chorismate: step 5/5.</text>
</comment>
<comment type="subunit">
    <text evidence="1">Tetramer of two alpha and two beta chains.</text>
</comment>
<comment type="similarity">
    <text evidence="1">Belongs to the TrpB family.</text>
</comment>
<reference key="1">
    <citation type="submission" date="2008-05" db="EMBL/GenBank/DDBJ databases">
        <title>Complete sequence of Rhodopseudomonas palustris TIE-1.</title>
        <authorList>
            <consortium name="US DOE Joint Genome Institute"/>
            <person name="Lucas S."/>
            <person name="Copeland A."/>
            <person name="Lapidus A."/>
            <person name="Glavina del Rio T."/>
            <person name="Dalin E."/>
            <person name="Tice H."/>
            <person name="Pitluck S."/>
            <person name="Chain P."/>
            <person name="Malfatti S."/>
            <person name="Shin M."/>
            <person name="Vergez L."/>
            <person name="Lang D."/>
            <person name="Schmutz J."/>
            <person name="Larimer F."/>
            <person name="Land M."/>
            <person name="Hauser L."/>
            <person name="Kyrpides N."/>
            <person name="Mikhailova N."/>
            <person name="Emerson D."/>
            <person name="Newman D.K."/>
            <person name="Roden E."/>
            <person name="Richardson P."/>
        </authorList>
    </citation>
    <scope>NUCLEOTIDE SEQUENCE [LARGE SCALE GENOMIC DNA]</scope>
    <source>
        <strain>TIE-1</strain>
    </source>
</reference>
<proteinExistence type="inferred from homology"/>
<sequence length="404" mass="43570">MNQALPNSFRSGPDERGHFGIYGGRFVAETLMPLILDLEKAYAEAKADPAFRAEMDNHLKHYVGRPSALYFAERLTEHFGGAKIYFKREDLNHTGAHKVNNVLGQIMLAKRMGKPRVIAETGAGMHGVATATMCAKFGLECVVFMGAVDVERQQPNVLRMKALGAEVRPVTSGANTLKDAMNEALRDWVTNVHDTFYCIGTVAGPHPYPMMVRDFQAVIGQEVREQIMQAEGRLPDSLVACIGGGSNAMGLFHPFLDDPGVAIYGVEAAGHGLDKLHAASIAGGKPGVLHGNRTYLLMDADGQIEEAHSISAGLDYPGVGPEHSWLHDVGRVNFLSATDTEALDAFKLCCRLEGIIPALEPSHALAKVADLAPKLPKDHLMVVNMSGRGDKDLASVAEHLGGKF</sequence>
<organism>
    <name type="scientific">Rhodopseudomonas palustris (strain TIE-1)</name>
    <dbReference type="NCBI Taxonomy" id="395960"/>
    <lineage>
        <taxon>Bacteria</taxon>
        <taxon>Pseudomonadati</taxon>
        <taxon>Pseudomonadota</taxon>
        <taxon>Alphaproteobacteria</taxon>
        <taxon>Hyphomicrobiales</taxon>
        <taxon>Nitrobacteraceae</taxon>
        <taxon>Rhodopseudomonas</taxon>
    </lineage>
</organism>
<keyword id="KW-0028">Amino-acid biosynthesis</keyword>
<keyword id="KW-0057">Aromatic amino acid biosynthesis</keyword>
<keyword id="KW-0456">Lyase</keyword>
<keyword id="KW-0663">Pyridoxal phosphate</keyword>
<keyword id="KW-0822">Tryptophan biosynthesis</keyword>
<evidence type="ECO:0000255" key="1">
    <source>
        <dbReference type="HAMAP-Rule" id="MF_00133"/>
    </source>
</evidence>
<protein>
    <recommendedName>
        <fullName evidence="1">Tryptophan synthase beta chain</fullName>
        <ecNumber evidence="1">4.2.1.20</ecNumber>
    </recommendedName>
</protein>
<name>TRPB_RHOPT</name>
<feature type="chain" id="PRO_1000095814" description="Tryptophan synthase beta chain">
    <location>
        <begin position="1"/>
        <end position="404"/>
    </location>
</feature>
<feature type="modified residue" description="N6-(pyridoxal phosphate)lysine" evidence="1">
    <location>
        <position position="98"/>
    </location>
</feature>